<comment type="function">
    <text evidence="1">Nucleotidase which shows specific activity towards cytidine monophosphate (CMP) and 7-methylguanosine monophosphate (m(7)GMP). CMP seems to be the preferred substrate.</text>
</comment>
<comment type="catalytic activity">
    <reaction evidence="1">
        <text>N(7)-methyl-GMP + H2O = N(7)-methylguanosine + phosphate</text>
        <dbReference type="Rhea" id="RHEA:37107"/>
        <dbReference type="ChEBI" id="CHEBI:15377"/>
        <dbReference type="ChEBI" id="CHEBI:20794"/>
        <dbReference type="ChEBI" id="CHEBI:43474"/>
        <dbReference type="ChEBI" id="CHEBI:58285"/>
        <dbReference type="EC" id="3.1.3.91"/>
    </reaction>
</comment>
<comment type="catalytic activity">
    <reaction evidence="3">
        <text>a ribonucleoside 5'-phosphate + H2O = a ribonucleoside + phosphate</text>
        <dbReference type="Rhea" id="RHEA:12484"/>
        <dbReference type="ChEBI" id="CHEBI:15377"/>
        <dbReference type="ChEBI" id="CHEBI:18254"/>
        <dbReference type="ChEBI" id="CHEBI:43474"/>
        <dbReference type="ChEBI" id="CHEBI:58043"/>
        <dbReference type="EC" id="3.1.3.5"/>
    </reaction>
</comment>
<comment type="subunit">
    <text>Monomer.</text>
</comment>
<comment type="subcellular location">
    <subcellularLocation>
        <location evidence="5">Cytoplasm</location>
    </subcellularLocation>
</comment>
<comment type="alternative products">
    <event type="alternative splicing"/>
    <isoform>
        <id>Q9D020-3</id>
        <name>2</name>
        <sequence type="displayed"/>
    </isoform>
    <isoform>
        <id>Q9D020-1</id>
        <name>1</name>
        <sequence type="described" ref="VSP_021566"/>
    </isoform>
</comment>
<comment type="tissue specificity">
    <text>Isoform 2 is highly expressed in the brain, heart, spleen, kidney and blood. Isoform 2 is expressed (at protein level) in the spleen, skeletal muscle and gastrointestinal epithelia.</text>
</comment>
<comment type="developmental stage">
    <text>Isoform 2 is weakly expressed from 7.5 dpc and the expression level steadily increases through gestation. At 9.5 dpc and 10.5 dpc is first detected colocalizing with embryonic blood cells within the region of the septum transversum and within the cardiac chambers and dorsal aorta. At 12.5 dpc expression is found in the ventral neural tube and in the trigeminal ganglia and in the liver and dorsal root ganglia. Expression persists in the liver, dorsal root and trigeminal ganglia at 13.5 dpc and weaker expression becomes apparent in cardiac and skeletal muscle. At 16.5 dpc expression is detected in liver, myocardium, tongue, bronchial epithelium, gastrointestinal epithelium, cartilage and forebrain neuroepithelium.</text>
</comment>
<comment type="similarity">
    <text evidence="5">Belongs to the pyrimidine 5'-nucleotidase family.</text>
</comment>
<organism>
    <name type="scientific">Mus musculus</name>
    <name type="common">Mouse</name>
    <dbReference type="NCBI Taxonomy" id="10090"/>
    <lineage>
        <taxon>Eukaryota</taxon>
        <taxon>Metazoa</taxon>
        <taxon>Chordata</taxon>
        <taxon>Craniata</taxon>
        <taxon>Vertebrata</taxon>
        <taxon>Euteleostomi</taxon>
        <taxon>Mammalia</taxon>
        <taxon>Eutheria</taxon>
        <taxon>Euarchontoglires</taxon>
        <taxon>Glires</taxon>
        <taxon>Rodentia</taxon>
        <taxon>Myomorpha</taxon>
        <taxon>Muroidea</taxon>
        <taxon>Muridae</taxon>
        <taxon>Murinae</taxon>
        <taxon>Mus</taxon>
        <taxon>Mus</taxon>
    </lineage>
</organism>
<accession>Q9D020</accession>
<accession>Q8CI05</accession>
<accession>Q9D0D9</accession>
<name>5NT3A_MOUSE</name>
<proteinExistence type="evidence at protein level"/>
<sequence>MDRAAVARVGAVASASVCAVVAGVVLAQYIFTLKRKTGRKTKIIEMMPEFQKSSVRIKNPTRVEEIICGLIKGGAAKLQIITDFDMTLSRFSYNGKRCPTCHNIIDNCKLVTDECRRKLLQLKEQYYAIEVDPVLTVEEKFPYMVEWYTKSHGLLIEQGIPKAKLKEIVADSDVMLKEGYENFFGKLQQHGIPVFIFSAGIGDVLEEVIRQAGVYHSNVKVVSNFMDFDENGVLKGFKGELIHVFNKHDGALKNTDYFSQLKDNSNIILLGDSQGDLRMADGVANVEHILKIGYLNDRVDELLEKYMDSYDIVLVKEESLEVVNSILQKTL</sequence>
<evidence type="ECO:0000250" key="1">
    <source>
        <dbReference type="UniProtKB" id="Q9H0P0"/>
    </source>
</evidence>
<evidence type="ECO:0000250" key="2">
    <source>
        <dbReference type="UniProtKB" id="Q9W197"/>
    </source>
</evidence>
<evidence type="ECO:0000269" key="3">
    <source>
    </source>
</evidence>
<evidence type="ECO:0000303" key="4">
    <source>
    </source>
</evidence>
<evidence type="ECO:0000305" key="5"/>
<evidence type="ECO:0000305" key="6">
    <source>
    </source>
</evidence>
<evidence type="ECO:0007744" key="7">
    <source>
    </source>
</evidence>
<evidence type="ECO:0007829" key="8">
    <source>
        <dbReference type="PDB" id="2Q4T"/>
    </source>
</evidence>
<evidence type="ECO:0007829" key="9">
    <source>
        <dbReference type="PDB" id="4FE3"/>
    </source>
</evidence>
<evidence type="ECO:0007829" key="10">
    <source>
        <dbReference type="PDB" id="4KX5"/>
    </source>
</evidence>
<dbReference type="EC" id="3.1.3.5" evidence="3"/>
<dbReference type="EC" id="3.1.3.91" evidence="1"/>
<dbReference type="EMBL" id="AK011525">
    <property type="protein sequence ID" value="BAB27677.2"/>
    <property type="molecule type" value="mRNA"/>
</dbReference>
<dbReference type="EMBL" id="AK011894">
    <property type="protein sequence ID" value="BAB27901.2"/>
    <property type="molecule type" value="mRNA"/>
</dbReference>
<dbReference type="EMBL" id="BC038029">
    <property type="protein sequence ID" value="AAH38029.1"/>
    <property type="molecule type" value="mRNA"/>
</dbReference>
<dbReference type="CCDS" id="CCDS20171.1">
    <molecule id="Q9D020-3"/>
</dbReference>
<dbReference type="CCDS" id="CCDS57424.1">
    <molecule id="Q9D020-1"/>
</dbReference>
<dbReference type="RefSeq" id="NP_001239303.1">
    <molecule id="Q9D020-1"/>
    <property type="nucleotide sequence ID" value="NM_001252374.1"/>
</dbReference>
<dbReference type="RefSeq" id="NP_080280.3">
    <molecule id="Q9D020-3"/>
    <property type="nucleotide sequence ID" value="NM_026004.3"/>
</dbReference>
<dbReference type="RefSeq" id="XP_006505335.1">
    <property type="nucleotide sequence ID" value="XM_006505272.1"/>
</dbReference>
<dbReference type="RefSeq" id="XP_006505336.1">
    <molecule id="Q9D020-1"/>
    <property type="nucleotide sequence ID" value="XM_006505273.1"/>
</dbReference>
<dbReference type="RefSeq" id="XP_011239413.1">
    <molecule id="Q9D020-1"/>
    <property type="nucleotide sequence ID" value="XM_011241111.1"/>
</dbReference>
<dbReference type="PDB" id="2BDU">
    <property type="method" value="X-ray"/>
    <property type="resolution" value="2.35 A"/>
    <property type="chains" value="A/B=46-331"/>
</dbReference>
<dbReference type="PDB" id="2G06">
    <property type="method" value="X-ray"/>
    <property type="resolution" value="2.25 A"/>
    <property type="chains" value="A/B=46-331"/>
</dbReference>
<dbReference type="PDB" id="2G07">
    <property type="method" value="X-ray"/>
    <property type="resolution" value="2.30 A"/>
    <property type="chains" value="A/B=46-331"/>
</dbReference>
<dbReference type="PDB" id="2G08">
    <property type="method" value="X-ray"/>
    <property type="resolution" value="2.35 A"/>
    <property type="chains" value="A/B=46-331"/>
</dbReference>
<dbReference type="PDB" id="2G09">
    <property type="method" value="X-ray"/>
    <property type="resolution" value="2.10 A"/>
    <property type="chains" value="A/B=46-331"/>
</dbReference>
<dbReference type="PDB" id="2G0A">
    <property type="method" value="X-ray"/>
    <property type="resolution" value="2.35 A"/>
    <property type="chains" value="A/B=46-331"/>
</dbReference>
<dbReference type="PDB" id="2Q4T">
    <property type="method" value="X-ray"/>
    <property type="resolution" value="2.35 A"/>
    <property type="chains" value="A/B=46-331"/>
</dbReference>
<dbReference type="PDB" id="4FE3">
    <property type="method" value="X-ray"/>
    <property type="resolution" value="1.74 A"/>
    <property type="chains" value="A=46-331"/>
</dbReference>
<dbReference type="PDB" id="4KX3">
    <property type="method" value="X-ray"/>
    <property type="resolution" value="2.10 A"/>
    <property type="chains" value="A=46-331"/>
</dbReference>
<dbReference type="PDB" id="4KX5">
    <property type="method" value="X-ray"/>
    <property type="resolution" value="1.90 A"/>
    <property type="chains" value="A=46-331"/>
</dbReference>
<dbReference type="PDBsum" id="2BDU"/>
<dbReference type="PDBsum" id="2G06"/>
<dbReference type="PDBsum" id="2G07"/>
<dbReference type="PDBsum" id="2G08"/>
<dbReference type="PDBsum" id="2G09"/>
<dbReference type="PDBsum" id="2G0A"/>
<dbReference type="PDBsum" id="2Q4T"/>
<dbReference type="PDBsum" id="4FE3"/>
<dbReference type="PDBsum" id="4KX3"/>
<dbReference type="PDBsum" id="4KX5"/>
<dbReference type="SMR" id="Q9D020"/>
<dbReference type="BioGRID" id="223400">
    <property type="interactions" value="1"/>
</dbReference>
<dbReference type="FunCoup" id="Q9D020">
    <property type="interactions" value="3043"/>
</dbReference>
<dbReference type="STRING" id="10090.ENSMUSP00000031793"/>
<dbReference type="GlyGen" id="Q9D020">
    <property type="glycosylation" value="1 site, 1 O-linked glycan (1 site)"/>
</dbReference>
<dbReference type="iPTMnet" id="Q9D020"/>
<dbReference type="PhosphoSitePlus" id="Q9D020"/>
<dbReference type="SwissPalm" id="Q9D020"/>
<dbReference type="jPOST" id="Q9D020"/>
<dbReference type="PaxDb" id="10090-ENSMUSP00000031793"/>
<dbReference type="PeptideAtlas" id="Q9D020"/>
<dbReference type="ProteomicsDB" id="285574">
    <molecule id="Q9D020-3"/>
</dbReference>
<dbReference type="ProteomicsDB" id="285575">
    <molecule id="Q9D020-1"/>
</dbReference>
<dbReference type="Pumba" id="Q9D020"/>
<dbReference type="Antibodypedia" id="26385">
    <property type="antibodies" value="179 antibodies from 27 providers"/>
</dbReference>
<dbReference type="DNASU" id="107569"/>
<dbReference type="Ensembl" id="ENSMUST00000031793.8">
    <molecule id="Q9D020-3"/>
    <property type="protein sequence ID" value="ENSMUSP00000031793.6"/>
    <property type="gene ID" value="ENSMUSG00000029780.15"/>
</dbReference>
<dbReference type="Ensembl" id="ENSMUST00000101367.9">
    <molecule id="Q9D020-1"/>
    <property type="protein sequence ID" value="ENSMUSP00000098918.3"/>
    <property type="gene ID" value="ENSMUSG00000029780.15"/>
</dbReference>
<dbReference type="GeneID" id="107569"/>
<dbReference type="KEGG" id="mmu:107569"/>
<dbReference type="UCSC" id="uc009cbq.3">
    <molecule id="Q9D020-1"/>
    <property type="organism name" value="mouse"/>
</dbReference>
<dbReference type="UCSC" id="uc009cbr.3">
    <molecule id="Q9D020-3"/>
    <property type="organism name" value="mouse"/>
</dbReference>
<dbReference type="AGR" id="MGI:1927186"/>
<dbReference type="CTD" id="107569"/>
<dbReference type="MGI" id="MGI:1927186">
    <property type="gene designation" value="Nt5c3"/>
</dbReference>
<dbReference type="VEuPathDB" id="HostDB:ENSMUSG00000029780"/>
<dbReference type="eggNOG" id="KOG3128">
    <property type="taxonomic scope" value="Eukaryota"/>
</dbReference>
<dbReference type="GeneTree" id="ENSGT00390000012959"/>
<dbReference type="HOGENOM" id="CLU_048584_0_2_1"/>
<dbReference type="InParanoid" id="Q9D020"/>
<dbReference type="OMA" id="GPERMQI"/>
<dbReference type="OrthoDB" id="10014216at2759"/>
<dbReference type="PhylomeDB" id="Q9D020"/>
<dbReference type="TreeFam" id="TF314663"/>
<dbReference type="BRENDA" id="3.1.3.5">
    <property type="organism ID" value="3474"/>
</dbReference>
<dbReference type="Reactome" id="R-MMU-73621">
    <property type="pathway name" value="Pyrimidine catabolism"/>
</dbReference>
<dbReference type="BioGRID-ORCS" id="107569">
    <property type="hits" value="4 hits in 78 CRISPR screens"/>
</dbReference>
<dbReference type="ChiTaRS" id="Nt5c3">
    <property type="organism name" value="mouse"/>
</dbReference>
<dbReference type="EvolutionaryTrace" id="Q9D020"/>
<dbReference type="PRO" id="PR:Q9D020"/>
<dbReference type="Proteomes" id="UP000000589">
    <property type="component" value="Chromosome 6"/>
</dbReference>
<dbReference type="RNAct" id="Q9D020">
    <property type="molecule type" value="protein"/>
</dbReference>
<dbReference type="Bgee" id="ENSMUSG00000029780">
    <property type="expression patterns" value="Expressed in blood and 272 other cell types or tissues"/>
</dbReference>
<dbReference type="ExpressionAtlas" id="Q9D020">
    <property type="expression patterns" value="baseline and differential"/>
</dbReference>
<dbReference type="GO" id="GO:0005737">
    <property type="term" value="C:cytoplasm"/>
    <property type="evidence" value="ECO:0000250"/>
    <property type="project" value="UniProtKB"/>
</dbReference>
<dbReference type="GO" id="GO:0005829">
    <property type="term" value="C:cytosol"/>
    <property type="evidence" value="ECO:0000266"/>
    <property type="project" value="MGI"/>
</dbReference>
<dbReference type="GO" id="GO:0005783">
    <property type="term" value="C:endoplasmic reticulum"/>
    <property type="evidence" value="ECO:0000250"/>
    <property type="project" value="UniProtKB"/>
</dbReference>
<dbReference type="GO" id="GO:0005739">
    <property type="term" value="C:mitochondrion"/>
    <property type="evidence" value="ECO:0007005"/>
    <property type="project" value="MGI"/>
</dbReference>
<dbReference type="GO" id="GO:0016604">
    <property type="term" value="C:nuclear body"/>
    <property type="evidence" value="ECO:0007669"/>
    <property type="project" value="Ensembl"/>
</dbReference>
<dbReference type="GO" id="GO:0008253">
    <property type="term" value="F:5'-nucleotidase activity"/>
    <property type="evidence" value="ECO:0000314"/>
    <property type="project" value="MGI"/>
</dbReference>
<dbReference type="GO" id="GO:0000287">
    <property type="term" value="F:magnesium ion binding"/>
    <property type="evidence" value="ECO:0007669"/>
    <property type="project" value="InterPro"/>
</dbReference>
<dbReference type="GO" id="GO:0000166">
    <property type="term" value="F:nucleotide binding"/>
    <property type="evidence" value="ECO:0007669"/>
    <property type="project" value="UniProtKB-KW"/>
</dbReference>
<dbReference type="GO" id="GO:0016740">
    <property type="term" value="F:transferase activity"/>
    <property type="evidence" value="ECO:0007669"/>
    <property type="project" value="UniProtKB-KW"/>
</dbReference>
<dbReference type="GO" id="GO:0046085">
    <property type="term" value="P:adenosine metabolic process"/>
    <property type="evidence" value="ECO:0007669"/>
    <property type="project" value="Ensembl"/>
</dbReference>
<dbReference type="GO" id="GO:0006248">
    <property type="term" value="P:CMP catabolic process"/>
    <property type="evidence" value="ECO:0000314"/>
    <property type="project" value="MGI"/>
</dbReference>
<dbReference type="GO" id="GO:0006249">
    <property type="term" value="P:dCMP catabolic process"/>
    <property type="evidence" value="ECO:0000266"/>
    <property type="project" value="MGI"/>
</dbReference>
<dbReference type="GO" id="GO:0046074">
    <property type="term" value="P:dTMP catabolic process"/>
    <property type="evidence" value="ECO:0000266"/>
    <property type="project" value="MGI"/>
</dbReference>
<dbReference type="GO" id="GO:0046079">
    <property type="term" value="P:dUMP catabolic process"/>
    <property type="evidence" value="ECO:0000266"/>
    <property type="project" value="MGI"/>
</dbReference>
<dbReference type="GO" id="GO:0046050">
    <property type="term" value="P:UMP catabolic process"/>
    <property type="evidence" value="ECO:0000266"/>
    <property type="project" value="MGI"/>
</dbReference>
<dbReference type="CDD" id="cd07504">
    <property type="entry name" value="HAD_5NT"/>
    <property type="match status" value="1"/>
</dbReference>
<dbReference type="FunFam" id="1.10.150.340:FF:000001">
    <property type="entry name" value="Cytosolic 5-nucleotidase 3-like"/>
    <property type="match status" value="1"/>
</dbReference>
<dbReference type="FunFam" id="3.40.50.1000:FF:000032">
    <property type="entry name" value="Cytosolic 5-nucleotidase 3-like"/>
    <property type="match status" value="1"/>
</dbReference>
<dbReference type="Gene3D" id="3.40.50.1000">
    <property type="entry name" value="HAD superfamily/HAD-like"/>
    <property type="match status" value="1"/>
</dbReference>
<dbReference type="Gene3D" id="1.10.150.340">
    <property type="entry name" value="Pyrimidine 5'-nucleotidase (UMPH-1), N-terminal domain"/>
    <property type="match status" value="1"/>
</dbReference>
<dbReference type="InterPro" id="IPR036412">
    <property type="entry name" value="HAD-like_sf"/>
</dbReference>
<dbReference type="InterPro" id="IPR023214">
    <property type="entry name" value="HAD_sf"/>
</dbReference>
<dbReference type="InterPro" id="IPR006434">
    <property type="entry name" value="Pyrimidine_nucleotidase_eu"/>
</dbReference>
<dbReference type="NCBIfam" id="TIGR01488">
    <property type="entry name" value="HAD-SF-IB"/>
    <property type="match status" value="1"/>
</dbReference>
<dbReference type="NCBIfam" id="TIGR01544">
    <property type="entry name" value="HAD-SF-IE"/>
    <property type="match status" value="1"/>
</dbReference>
<dbReference type="PANTHER" id="PTHR13045">
    <property type="entry name" value="5'-NUCLEOTIDASE"/>
    <property type="match status" value="1"/>
</dbReference>
<dbReference type="PANTHER" id="PTHR13045:SF14">
    <property type="entry name" value="CYTOSOLIC 5'-NUCLEOTIDASE 3A"/>
    <property type="match status" value="1"/>
</dbReference>
<dbReference type="Pfam" id="PF05822">
    <property type="entry name" value="UMPH-1"/>
    <property type="match status" value="1"/>
</dbReference>
<dbReference type="SFLD" id="SFLDG01128">
    <property type="entry name" value="C1.4:_5'-Nucleotidase_Like"/>
    <property type="match status" value="1"/>
</dbReference>
<dbReference type="SFLD" id="SFLDS00003">
    <property type="entry name" value="Haloacid_Dehalogenase"/>
    <property type="match status" value="1"/>
</dbReference>
<dbReference type="SUPFAM" id="SSF56784">
    <property type="entry name" value="HAD-like"/>
    <property type="match status" value="1"/>
</dbReference>
<gene>
    <name type="primary">Nt5c3a</name>
    <name type="synonym">Nt5c3</name>
</gene>
<feature type="chain" id="PRO_0000064388" description="Cytosolic 5'-nucleotidase 3A">
    <location>
        <begin position="1"/>
        <end position="331"/>
    </location>
</feature>
<feature type="active site" description="Nucleophile" evidence="3">
    <location>
        <position position="83"/>
    </location>
</feature>
<feature type="active site" description="Proton donor" evidence="3">
    <location>
        <position position="85"/>
    </location>
</feature>
<feature type="binding site" evidence="3">
    <location>
        <position position="83"/>
    </location>
    <ligand>
        <name>Mg(2+)</name>
        <dbReference type="ChEBI" id="CHEBI:18420"/>
    </ligand>
</feature>
<feature type="binding site" evidence="3">
    <location>
        <position position="85"/>
    </location>
    <ligand>
        <name>Mg(2+)</name>
        <dbReference type="ChEBI" id="CHEBI:18420"/>
    </ligand>
</feature>
<feature type="binding site" evidence="2">
    <location>
        <position position="130"/>
    </location>
    <ligand>
        <name>CMP</name>
        <dbReference type="ChEBI" id="CHEBI:60377"/>
    </ligand>
</feature>
<feature type="binding site" evidence="2">
    <location>
        <position position="130"/>
    </location>
    <ligand>
        <name>N(7)-methyl-GMP</name>
        <dbReference type="ChEBI" id="CHEBI:58285"/>
    </ligand>
</feature>
<feature type="binding site" evidence="2">
    <location>
        <position position="151"/>
    </location>
    <ligand>
        <name>N(7)-methyl-GMP</name>
        <dbReference type="ChEBI" id="CHEBI:58285"/>
    </ligand>
</feature>
<feature type="binding site" evidence="3">
    <location>
        <begin position="198"/>
        <end position="200"/>
    </location>
    <ligand>
        <name>substrate</name>
    </ligand>
</feature>
<feature type="binding site" evidence="3">
    <location>
        <position position="247"/>
    </location>
    <ligand>
        <name>substrate</name>
    </ligand>
</feature>
<feature type="binding site" evidence="3">
    <location>
        <position position="272"/>
    </location>
    <ligand>
        <name>Mg(2+)</name>
        <dbReference type="ChEBI" id="CHEBI:18420"/>
    </ligand>
</feature>
<feature type="modified residue" description="Phosphoserine" evidence="7">
    <location>
        <position position="273"/>
    </location>
</feature>
<feature type="splice variant" id="VSP_021566" description="In isoform 1." evidence="4">
    <original>MDRAAVARVGAVASASVCAVVAGVVLAQYIFTLKRKTGRKTKIIE</original>
    <variation>MTNQESAVHLK</variation>
    <location>
        <begin position="1"/>
        <end position="45"/>
    </location>
</feature>
<feature type="sequence conflict" description="In Ref. 2; BAB27677." evidence="5" ref="2">
    <original>F</original>
    <variation>L</variation>
    <location>
        <position position="183"/>
    </location>
</feature>
<feature type="sequence conflict" description="In Ref. 2; BAB27901." evidence="5" ref="2">
    <original>Q</original>
    <variation>R</variation>
    <location>
        <position position="260"/>
    </location>
</feature>
<feature type="helix" evidence="10">
    <location>
        <begin position="44"/>
        <end position="46"/>
    </location>
</feature>
<feature type="helix" evidence="9">
    <location>
        <begin position="48"/>
        <end position="50"/>
    </location>
</feature>
<feature type="strand" evidence="8">
    <location>
        <begin position="55"/>
        <end position="58"/>
    </location>
</feature>
<feature type="helix" evidence="9">
    <location>
        <begin position="60"/>
        <end position="77"/>
    </location>
</feature>
<feature type="strand" evidence="9">
    <location>
        <begin position="78"/>
        <end position="82"/>
    </location>
</feature>
<feature type="turn" evidence="9">
    <location>
        <begin position="85"/>
        <end position="87"/>
    </location>
</feature>
<feature type="strand" evidence="9">
    <location>
        <begin position="91"/>
        <end position="93"/>
    </location>
</feature>
<feature type="helix" evidence="9">
    <location>
        <begin position="101"/>
        <end position="106"/>
    </location>
</feature>
<feature type="helix" evidence="9">
    <location>
        <begin position="113"/>
        <end position="131"/>
    </location>
</feature>
<feature type="strand" evidence="9">
    <location>
        <begin position="133"/>
        <end position="135"/>
    </location>
</feature>
<feature type="helix" evidence="9">
    <location>
        <begin position="137"/>
        <end position="157"/>
    </location>
</feature>
<feature type="helix" evidence="9">
    <location>
        <begin position="162"/>
        <end position="164"/>
    </location>
</feature>
<feature type="helix" evidence="9">
    <location>
        <begin position="165"/>
        <end position="170"/>
    </location>
</feature>
<feature type="helix" evidence="9">
    <location>
        <begin position="180"/>
        <end position="189"/>
    </location>
</feature>
<feature type="strand" evidence="9">
    <location>
        <begin position="194"/>
        <end position="201"/>
    </location>
</feature>
<feature type="helix" evidence="9">
    <location>
        <begin position="202"/>
        <end position="211"/>
    </location>
</feature>
<feature type="strand" evidence="9">
    <location>
        <begin position="219"/>
        <end position="224"/>
    </location>
</feature>
<feature type="strand" evidence="9">
    <location>
        <begin position="226"/>
        <end position="228"/>
    </location>
</feature>
<feature type="strand" evidence="9">
    <location>
        <begin position="232"/>
        <end position="237"/>
    </location>
</feature>
<feature type="helix" evidence="9">
    <location>
        <begin position="247"/>
        <end position="252"/>
    </location>
</feature>
<feature type="helix" evidence="9">
    <location>
        <begin position="255"/>
        <end position="260"/>
    </location>
</feature>
<feature type="turn" evidence="9">
    <location>
        <begin position="261"/>
        <end position="263"/>
    </location>
</feature>
<feature type="strand" evidence="9">
    <location>
        <begin position="266"/>
        <end position="273"/>
    </location>
</feature>
<feature type="helix" evidence="9">
    <location>
        <begin position="274"/>
        <end position="278"/>
    </location>
</feature>
<feature type="turn" evidence="9">
    <location>
        <begin position="279"/>
        <end position="282"/>
    </location>
</feature>
<feature type="strand" evidence="9">
    <location>
        <begin position="287"/>
        <end position="295"/>
    </location>
</feature>
<feature type="helix" evidence="9">
    <location>
        <begin position="299"/>
        <end position="309"/>
    </location>
</feature>
<feature type="strand" evidence="9">
    <location>
        <begin position="310"/>
        <end position="316"/>
    </location>
</feature>
<feature type="helix" evidence="9">
    <location>
        <begin position="321"/>
        <end position="330"/>
    </location>
</feature>
<reference key="1">
    <citation type="journal article" date="2000" name="Dev. Genes Evol.">
        <title>Cloning and expression analysis of murine lupin, a member of a novel gene family that is conserved through evolution and associated with Lupus inclusions.</title>
        <authorList>
            <person name="Lu M.M."/>
            <person name="Chen F."/>
            <person name="Gitler A."/>
            <person name="Li J."/>
            <person name="Jin F."/>
            <person name="Ma X.K."/>
            <person name="Epstein J.A."/>
        </authorList>
    </citation>
    <scope>NUCLEOTIDE SEQUENCE [MRNA] (ISOFORM 2)</scope>
</reference>
<reference key="2">
    <citation type="journal article" date="2005" name="Science">
        <title>The transcriptional landscape of the mammalian genome.</title>
        <authorList>
            <person name="Carninci P."/>
            <person name="Kasukawa T."/>
            <person name="Katayama S."/>
            <person name="Gough J."/>
            <person name="Frith M.C."/>
            <person name="Maeda N."/>
            <person name="Oyama R."/>
            <person name="Ravasi T."/>
            <person name="Lenhard B."/>
            <person name="Wells C."/>
            <person name="Kodzius R."/>
            <person name="Shimokawa K."/>
            <person name="Bajic V.B."/>
            <person name="Brenner S.E."/>
            <person name="Batalov S."/>
            <person name="Forrest A.R."/>
            <person name="Zavolan M."/>
            <person name="Davis M.J."/>
            <person name="Wilming L.G."/>
            <person name="Aidinis V."/>
            <person name="Allen J.E."/>
            <person name="Ambesi-Impiombato A."/>
            <person name="Apweiler R."/>
            <person name="Aturaliya R.N."/>
            <person name="Bailey T.L."/>
            <person name="Bansal M."/>
            <person name="Baxter L."/>
            <person name="Beisel K.W."/>
            <person name="Bersano T."/>
            <person name="Bono H."/>
            <person name="Chalk A.M."/>
            <person name="Chiu K.P."/>
            <person name="Choudhary V."/>
            <person name="Christoffels A."/>
            <person name="Clutterbuck D.R."/>
            <person name="Crowe M.L."/>
            <person name="Dalla E."/>
            <person name="Dalrymple B.P."/>
            <person name="de Bono B."/>
            <person name="Della Gatta G."/>
            <person name="di Bernardo D."/>
            <person name="Down T."/>
            <person name="Engstrom P."/>
            <person name="Fagiolini M."/>
            <person name="Faulkner G."/>
            <person name="Fletcher C.F."/>
            <person name="Fukushima T."/>
            <person name="Furuno M."/>
            <person name="Futaki S."/>
            <person name="Gariboldi M."/>
            <person name="Georgii-Hemming P."/>
            <person name="Gingeras T.R."/>
            <person name="Gojobori T."/>
            <person name="Green R.E."/>
            <person name="Gustincich S."/>
            <person name="Harbers M."/>
            <person name="Hayashi Y."/>
            <person name="Hensch T.K."/>
            <person name="Hirokawa N."/>
            <person name="Hill D."/>
            <person name="Huminiecki L."/>
            <person name="Iacono M."/>
            <person name="Ikeo K."/>
            <person name="Iwama A."/>
            <person name="Ishikawa T."/>
            <person name="Jakt M."/>
            <person name="Kanapin A."/>
            <person name="Katoh M."/>
            <person name="Kawasawa Y."/>
            <person name="Kelso J."/>
            <person name="Kitamura H."/>
            <person name="Kitano H."/>
            <person name="Kollias G."/>
            <person name="Krishnan S.P."/>
            <person name="Kruger A."/>
            <person name="Kummerfeld S.K."/>
            <person name="Kurochkin I.V."/>
            <person name="Lareau L.F."/>
            <person name="Lazarevic D."/>
            <person name="Lipovich L."/>
            <person name="Liu J."/>
            <person name="Liuni S."/>
            <person name="McWilliam S."/>
            <person name="Madan Babu M."/>
            <person name="Madera M."/>
            <person name="Marchionni L."/>
            <person name="Matsuda H."/>
            <person name="Matsuzawa S."/>
            <person name="Miki H."/>
            <person name="Mignone F."/>
            <person name="Miyake S."/>
            <person name="Morris K."/>
            <person name="Mottagui-Tabar S."/>
            <person name="Mulder N."/>
            <person name="Nakano N."/>
            <person name="Nakauchi H."/>
            <person name="Ng P."/>
            <person name="Nilsson R."/>
            <person name="Nishiguchi S."/>
            <person name="Nishikawa S."/>
            <person name="Nori F."/>
            <person name="Ohara O."/>
            <person name="Okazaki Y."/>
            <person name="Orlando V."/>
            <person name="Pang K.C."/>
            <person name="Pavan W.J."/>
            <person name="Pavesi G."/>
            <person name="Pesole G."/>
            <person name="Petrovsky N."/>
            <person name="Piazza S."/>
            <person name="Reed J."/>
            <person name="Reid J.F."/>
            <person name="Ring B.Z."/>
            <person name="Ringwald M."/>
            <person name="Rost B."/>
            <person name="Ruan Y."/>
            <person name="Salzberg S.L."/>
            <person name="Sandelin A."/>
            <person name="Schneider C."/>
            <person name="Schoenbach C."/>
            <person name="Sekiguchi K."/>
            <person name="Semple C.A."/>
            <person name="Seno S."/>
            <person name="Sessa L."/>
            <person name="Sheng Y."/>
            <person name="Shibata Y."/>
            <person name="Shimada H."/>
            <person name="Shimada K."/>
            <person name="Silva D."/>
            <person name="Sinclair B."/>
            <person name="Sperling S."/>
            <person name="Stupka E."/>
            <person name="Sugiura K."/>
            <person name="Sultana R."/>
            <person name="Takenaka Y."/>
            <person name="Taki K."/>
            <person name="Tammoja K."/>
            <person name="Tan S.L."/>
            <person name="Tang S."/>
            <person name="Taylor M.S."/>
            <person name="Tegner J."/>
            <person name="Teichmann S.A."/>
            <person name="Ueda H.R."/>
            <person name="van Nimwegen E."/>
            <person name="Verardo R."/>
            <person name="Wei C.L."/>
            <person name="Yagi K."/>
            <person name="Yamanishi H."/>
            <person name="Zabarovsky E."/>
            <person name="Zhu S."/>
            <person name="Zimmer A."/>
            <person name="Hide W."/>
            <person name="Bult C."/>
            <person name="Grimmond S.M."/>
            <person name="Teasdale R.D."/>
            <person name="Liu E.T."/>
            <person name="Brusic V."/>
            <person name="Quackenbush J."/>
            <person name="Wahlestedt C."/>
            <person name="Mattick J.S."/>
            <person name="Hume D.A."/>
            <person name="Kai C."/>
            <person name="Sasaki D."/>
            <person name="Tomaru Y."/>
            <person name="Fukuda S."/>
            <person name="Kanamori-Katayama M."/>
            <person name="Suzuki M."/>
            <person name="Aoki J."/>
            <person name="Arakawa T."/>
            <person name="Iida J."/>
            <person name="Imamura K."/>
            <person name="Itoh M."/>
            <person name="Kato T."/>
            <person name="Kawaji H."/>
            <person name="Kawagashira N."/>
            <person name="Kawashima T."/>
            <person name="Kojima M."/>
            <person name="Kondo S."/>
            <person name="Konno H."/>
            <person name="Nakano K."/>
            <person name="Ninomiya N."/>
            <person name="Nishio T."/>
            <person name="Okada M."/>
            <person name="Plessy C."/>
            <person name="Shibata K."/>
            <person name="Shiraki T."/>
            <person name="Suzuki S."/>
            <person name="Tagami M."/>
            <person name="Waki K."/>
            <person name="Watahiki A."/>
            <person name="Okamura-Oho Y."/>
            <person name="Suzuki H."/>
            <person name="Kawai J."/>
            <person name="Hayashizaki Y."/>
        </authorList>
    </citation>
    <scope>NUCLEOTIDE SEQUENCE [LARGE SCALE MRNA] (ISOFORM 2)</scope>
    <source>
        <strain>C57BL/6J</strain>
        <tissue>Embryo</tissue>
    </source>
</reference>
<reference key="3">
    <citation type="journal article" date="2004" name="Genome Res.">
        <title>The status, quality, and expansion of the NIH full-length cDNA project: the Mammalian Gene Collection (MGC).</title>
        <authorList>
            <consortium name="The MGC Project Team"/>
        </authorList>
    </citation>
    <scope>NUCLEOTIDE SEQUENCE [LARGE SCALE MRNA] (ISOFORM 1)</scope>
    <source>
        <strain>Czech II</strain>
        <tissue>Mammary gland</tissue>
    </source>
</reference>
<reference key="4">
    <citation type="submission" date="2009-01" db="UniProtKB">
        <authorList>
            <person name="Lubec G."/>
            <person name="Sunyer B."/>
            <person name="Chen W.-Q."/>
        </authorList>
    </citation>
    <scope>PROTEIN SEQUENCE OF 118-123</scope>
    <scope>IDENTIFICATION BY MASS SPECTROMETRY</scope>
    <source>
        <strain>OF1</strain>
        <tissue>Hippocampus</tissue>
    </source>
</reference>
<reference key="5">
    <citation type="journal article" date="2010" name="Cell">
        <title>A tissue-specific atlas of mouse protein phosphorylation and expression.</title>
        <authorList>
            <person name="Huttlin E.L."/>
            <person name="Jedrychowski M.P."/>
            <person name="Elias J.E."/>
            <person name="Goswami T."/>
            <person name="Rad R."/>
            <person name="Beausoleil S.A."/>
            <person name="Villen J."/>
            <person name="Haas W."/>
            <person name="Sowa M.E."/>
            <person name="Gygi S.P."/>
        </authorList>
    </citation>
    <scope>PHOSPHORYLATION [LARGE SCALE ANALYSIS] AT SER-273</scope>
    <scope>IDENTIFICATION BY MASS SPECTROMETRY [LARGE SCALE ANALYSIS]</scope>
    <source>
        <tissue>Brain</tissue>
        <tissue>Brown adipose tissue</tissue>
        <tissue>Heart</tissue>
        <tissue>Kidney</tissue>
        <tissue>Liver</tissue>
        <tissue>Lung</tissue>
        <tissue>Pancreas</tissue>
        <tissue>Spleen</tissue>
        <tissue>Testis</tissue>
    </source>
</reference>
<reference key="6">
    <citation type="journal article" date="2006" name="J. Biol. Chem.">
        <title>Structure of pyrimidine 5'-nucleotidase type 1. Insight into mechanism of action and inhibition during lead poisoning.</title>
        <authorList>
            <person name="Bitto E."/>
            <person name="Bingman C.A."/>
            <person name="Wesenberg G.E."/>
            <person name="McCoy J.G."/>
            <person name="Phillips G.N. Jr."/>
        </authorList>
    </citation>
    <scope>X-RAY CRYSTALLOGRAPHY (2.1 ANGSTROMS) (ISOFORM 1) IN COMPLEXES WITH MAGNESIUM; PHOSPHATE; TRANSITION STATE ANALOG AND LEAD IONS</scope>
    <scope>CATALYTIC ACTIVITY</scope>
    <scope>ACTIVE SITE</scope>
    <scope>METAL BINDING</scope>
</reference>
<keyword id="KW-0002">3D-structure</keyword>
<keyword id="KW-0025">Alternative splicing</keyword>
<keyword id="KW-0963">Cytoplasm</keyword>
<keyword id="KW-0903">Direct protein sequencing</keyword>
<keyword id="KW-0378">Hydrolase</keyword>
<keyword id="KW-0460">Magnesium</keyword>
<keyword id="KW-0479">Metal-binding</keyword>
<keyword id="KW-0546">Nucleotide metabolism</keyword>
<keyword id="KW-0547">Nucleotide-binding</keyword>
<keyword id="KW-0597">Phosphoprotein</keyword>
<keyword id="KW-1185">Reference proteome</keyword>
<keyword id="KW-0808">Transferase</keyword>
<protein>
    <recommendedName>
        <fullName evidence="6">Cytosolic 5'-nucleotidase 3A</fullName>
        <ecNumber evidence="3">3.1.3.5</ecNumber>
    </recommendedName>
    <alternativeName>
        <fullName evidence="1">7-methylguanosine phosphate-specific 5'-nucleotidase</fullName>
        <shortName>7-methylguanosine nucleotidase</shortName>
        <ecNumber evidence="1">3.1.3.91</ecNumber>
    </alternativeName>
    <alternativeName>
        <fullName>Cytosolic 5'-nucleotidase 3</fullName>
    </alternativeName>
    <alternativeName>
        <fullName>Cytosolic 5'-nucleotidase III</fullName>
        <shortName>cN-III</shortName>
    </alternativeName>
    <alternativeName>
        <fullName>Lupin</fullName>
    </alternativeName>
    <alternativeName>
        <fullName>Pyrimidine 5'-nucleotidase 1</fullName>
        <shortName>P5'N-1</shortName>
        <shortName>P5N-1</shortName>
        <shortName>PN-I</shortName>
    </alternativeName>
</protein>